<keyword id="KW-0342">GTP-binding</keyword>
<keyword id="KW-0547">Nucleotide-binding</keyword>
<keyword id="KW-0677">Repeat</keyword>
<keyword id="KW-0690">Ribosome biogenesis</keyword>
<gene>
    <name evidence="1" type="primary">der</name>
    <name type="synonym">engA</name>
    <name type="ordered locus">Ent638_3005</name>
</gene>
<proteinExistence type="inferred from homology"/>
<dbReference type="EMBL" id="CP000653">
    <property type="protein sequence ID" value="ABP61669.1"/>
    <property type="molecule type" value="Genomic_DNA"/>
</dbReference>
<dbReference type="RefSeq" id="WP_015960001.1">
    <property type="nucleotide sequence ID" value="NC_009436.1"/>
</dbReference>
<dbReference type="SMR" id="A4WD89"/>
<dbReference type="STRING" id="399742.Ent638_3005"/>
<dbReference type="KEGG" id="ent:Ent638_3005"/>
<dbReference type="eggNOG" id="COG1160">
    <property type="taxonomic scope" value="Bacteria"/>
</dbReference>
<dbReference type="HOGENOM" id="CLU_016077_6_2_6"/>
<dbReference type="OrthoDB" id="9805918at2"/>
<dbReference type="Proteomes" id="UP000000230">
    <property type="component" value="Chromosome"/>
</dbReference>
<dbReference type="GO" id="GO:0005525">
    <property type="term" value="F:GTP binding"/>
    <property type="evidence" value="ECO:0007669"/>
    <property type="project" value="UniProtKB-UniRule"/>
</dbReference>
<dbReference type="GO" id="GO:0043022">
    <property type="term" value="F:ribosome binding"/>
    <property type="evidence" value="ECO:0007669"/>
    <property type="project" value="TreeGrafter"/>
</dbReference>
<dbReference type="GO" id="GO:0042254">
    <property type="term" value="P:ribosome biogenesis"/>
    <property type="evidence" value="ECO:0007669"/>
    <property type="project" value="UniProtKB-KW"/>
</dbReference>
<dbReference type="CDD" id="cd01894">
    <property type="entry name" value="EngA1"/>
    <property type="match status" value="1"/>
</dbReference>
<dbReference type="CDD" id="cd01895">
    <property type="entry name" value="EngA2"/>
    <property type="match status" value="1"/>
</dbReference>
<dbReference type="FunFam" id="3.30.300.20:FF:000004">
    <property type="entry name" value="GTPase Der"/>
    <property type="match status" value="1"/>
</dbReference>
<dbReference type="FunFam" id="3.40.50.300:FF:000040">
    <property type="entry name" value="GTPase Der"/>
    <property type="match status" value="1"/>
</dbReference>
<dbReference type="FunFam" id="3.40.50.300:FF:000057">
    <property type="entry name" value="GTPase Der"/>
    <property type="match status" value="1"/>
</dbReference>
<dbReference type="Gene3D" id="3.30.300.20">
    <property type="match status" value="1"/>
</dbReference>
<dbReference type="Gene3D" id="3.40.50.300">
    <property type="entry name" value="P-loop containing nucleotide triphosphate hydrolases"/>
    <property type="match status" value="2"/>
</dbReference>
<dbReference type="HAMAP" id="MF_00195">
    <property type="entry name" value="GTPase_Der"/>
    <property type="match status" value="1"/>
</dbReference>
<dbReference type="InterPro" id="IPR031166">
    <property type="entry name" value="G_ENGA"/>
</dbReference>
<dbReference type="InterPro" id="IPR006073">
    <property type="entry name" value="GTP-bd"/>
</dbReference>
<dbReference type="InterPro" id="IPR016484">
    <property type="entry name" value="GTPase_Der"/>
</dbReference>
<dbReference type="InterPro" id="IPR032859">
    <property type="entry name" value="KH_dom-like"/>
</dbReference>
<dbReference type="InterPro" id="IPR015946">
    <property type="entry name" value="KH_dom-like_a/b"/>
</dbReference>
<dbReference type="InterPro" id="IPR027417">
    <property type="entry name" value="P-loop_NTPase"/>
</dbReference>
<dbReference type="InterPro" id="IPR005225">
    <property type="entry name" value="Small_GTP-bd"/>
</dbReference>
<dbReference type="NCBIfam" id="TIGR03594">
    <property type="entry name" value="GTPase_EngA"/>
    <property type="match status" value="1"/>
</dbReference>
<dbReference type="NCBIfam" id="TIGR00231">
    <property type="entry name" value="small_GTP"/>
    <property type="match status" value="2"/>
</dbReference>
<dbReference type="PANTHER" id="PTHR43834">
    <property type="entry name" value="GTPASE DER"/>
    <property type="match status" value="1"/>
</dbReference>
<dbReference type="PANTHER" id="PTHR43834:SF6">
    <property type="entry name" value="GTPASE DER"/>
    <property type="match status" value="1"/>
</dbReference>
<dbReference type="Pfam" id="PF14714">
    <property type="entry name" value="KH_dom-like"/>
    <property type="match status" value="1"/>
</dbReference>
<dbReference type="Pfam" id="PF01926">
    <property type="entry name" value="MMR_HSR1"/>
    <property type="match status" value="2"/>
</dbReference>
<dbReference type="PIRSF" id="PIRSF006485">
    <property type="entry name" value="GTP-binding_EngA"/>
    <property type="match status" value="1"/>
</dbReference>
<dbReference type="PRINTS" id="PR00326">
    <property type="entry name" value="GTP1OBG"/>
</dbReference>
<dbReference type="SUPFAM" id="SSF52540">
    <property type="entry name" value="P-loop containing nucleoside triphosphate hydrolases"/>
    <property type="match status" value="2"/>
</dbReference>
<dbReference type="PROSITE" id="PS51712">
    <property type="entry name" value="G_ENGA"/>
    <property type="match status" value="2"/>
</dbReference>
<reference key="1">
    <citation type="journal article" date="2010" name="PLoS Genet.">
        <title>Genome sequence of the plant growth promoting endophytic bacterium Enterobacter sp. 638.</title>
        <authorList>
            <person name="Taghavi S."/>
            <person name="van der Lelie D."/>
            <person name="Hoffman A."/>
            <person name="Zhang Y.B."/>
            <person name="Walla M.D."/>
            <person name="Vangronsveld J."/>
            <person name="Newman L."/>
            <person name="Monchy S."/>
        </authorList>
    </citation>
    <scope>NUCLEOTIDE SEQUENCE [LARGE SCALE GENOMIC DNA]</scope>
    <source>
        <strain>638</strain>
    </source>
</reference>
<comment type="function">
    <text evidence="1">GTPase that plays an essential role in the late steps of ribosome biogenesis.</text>
</comment>
<comment type="subunit">
    <text evidence="1">Associates with the 50S ribosomal subunit.</text>
</comment>
<comment type="similarity">
    <text evidence="1">Belongs to the TRAFAC class TrmE-Era-EngA-EngB-Septin-like GTPase superfamily. EngA (Der) GTPase family.</text>
</comment>
<sequence length="490" mass="54943">MVPVVALVGRPNVGKSTLFNRLTRTRDALVADFPGLTRDRKYGRAEVEGREFICIDTGGIDGTEDGVETRMAEQSLLAIEEADIVLFMVDARAGLMPADTAIAKHLRSREKPTFLVANKTDGIDADQAVADFWALGLGEIYPIAASHGRGVTSLLETVLMPWVDEINPPEEIDEDAAYWAQFEEAVEGKEEPVDDFNPQDLPIKLAIVGRPNVGKSTLTNRILGEDRVVVYDMPGTTRDSIYIPMQRDEREYVLIDTAGVRKRGKITDVVEKFSVIKTLQAIEDANVVMLVIDAREGISDQDLSLLGFILNSGRSLVIVVNKWDGLSNDVREQVKEMLDFRLGFIDFARIHFISALHGSGVGNLFESVREAYDSSTRRQSTAMLTRIMTMASEDHQPPLVRGRRVKLKYAHAGGYNPPIVVIHGNQVKDLPDSYKRYLMNYFRKSLDVMGTPIRIQFKEGENPFADKRNTLTPNQMRKRKRLIKHIKKSK</sequence>
<evidence type="ECO:0000255" key="1">
    <source>
        <dbReference type="HAMAP-Rule" id="MF_00195"/>
    </source>
</evidence>
<organism>
    <name type="scientific">Enterobacter sp. (strain 638)</name>
    <dbReference type="NCBI Taxonomy" id="399742"/>
    <lineage>
        <taxon>Bacteria</taxon>
        <taxon>Pseudomonadati</taxon>
        <taxon>Pseudomonadota</taxon>
        <taxon>Gammaproteobacteria</taxon>
        <taxon>Enterobacterales</taxon>
        <taxon>Enterobacteriaceae</taxon>
        <taxon>Enterobacter</taxon>
    </lineage>
</organism>
<name>DER_ENT38</name>
<accession>A4WD89</accession>
<protein>
    <recommendedName>
        <fullName evidence="1">GTPase Der</fullName>
    </recommendedName>
    <alternativeName>
        <fullName evidence="1">GTP-binding protein EngA</fullName>
    </alternativeName>
</protein>
<feature type="chain" id="PRO_1000058524" description="GTPase Der">
    <location>
        <begin position="1"/>
        <end position="490"/>
    </location>
</feature>
<feature type="domain" description="EngA-type G 1">
    <location>
        <begin position="3"/>
        <end position="166"/>
    </location>
</feature>
<feature type="domain" description="EngA-type G 2">
    <location>
        <begin position="203"/>
        <end position="376"/>
    </location>
</feature>
<feature type="domain" description="KH-like" evidence="1">
    <location>
        <begin position="377"/>
        <end position="461"/>
    </location>
</feature>
<feature type="binding site" evidence="1">
    <location>
        <begin position="9"/>
        <end position="16"/>
    </location>
    <ligand>
        <name>GTP</name>
        <dbReference type="ChEBI" id="CHEBI:37565"/>
        <label>1</label>
    </ligand>
</feature>
<feature type="binding site" evidence="1">
    <location>
        <begin position="56"/>
        <end position="60"/>
    </location>
    <ligand>
        <name>GTP</name>
        <dbReference type="ChEBI" id="CHEBI:37565"/>
        <label>1</label>
    </ligand>
</feature>
<feature type="binding site" evidence="1">
    <location>
        <begin position="118"/>
        <end position="121"/>
    </location>
    <ligand>
        <name>GTP</name>
        <dbReference type="ChEBI" id="CHEBI:37565"/>
        <label>1</label>
    </ligand>
</feature>
<feature type="binding site" evidence="1">
    <location>
        <begin position="209"/>
        <end position="216"/>
    </location>
    <ligand>
        <name>GTP</name>
        <dbReference type="ChEBI" id="CHEBI:37565"/>
        <label>2</label>
    </ligand>
</feature>
<feature type="binding site" evidence="1">
    <location>
        <begin position="256"/>
        <end position="260"/>
    </location>
    <ligand>
        <name>GTP</name>
        <dbReference type="ChEBI" id="CHEBI:37565"/>
        <label>2</label>
    </ligand>
</feature>
<feature type="binding site" evidence="1">
    <location>
        <begin position="321"/>
        <end position="324"/>
    </location>
    <ligand>
        <name>GTP</name>
        <dbReference type="ChEBI" id="CHEBI:37565"/>
        <label>2</label>
    </ligand>
</feature>